<keyword id="KW-0378">Hydrolase</keyword>
<keyword id="KW-0464">Manganese</keyword>
<keyword id="KW-1185">Reference proteome</keyword>
<organism>
    <name type="scientific">Methanocaldococcus jannaschii (strain ATCC 43067 / DSM 2661 / JAL-1 / JCM 10045 / NBRC 100440)</name>
    <name type="common">Methanococcus jannaschii</name>
    <dbReference type="NCBI Taxonomy" id="243232"/>
    <lineage>
        <taxon>Archaea</taxon>
        <taxon>Methanobacteriati</taxon>
        <taxon>Methanobacteriota</taxon>
        <taxon>Methanomada group</taxon>
        <taxon>Methanococci</taxon>
        <taxon>Methanococcales</taxon>
        <taxon>Methanocaldococcaceae</taxon>
        <taxon>Methanocaldococcus</taxon>
    </lineage>
</organism>
<reference key="1">
    <citation type="journal article" date="1996" name="Science">
        <title>Complete genome sequence of the methanogenic archaeon, Methanococcus jannaschii.</title>
        <authorList>
            <person name="Bult C.J."/>
            <person name="White O."/>
            <person name="Olsen G.J."/>
            <person name="Zhou L."/>
            <person name="Fleischmann R.D."/>
            <person name="Sutton G.G."/>
            <person name="Blake J.A."/>
            <person name="FitzGerald L.M."/>
            <person name="Clayton R.A."/>
            <person name="Gocayne J.D."/>
            <person name="Kerlavage A.R."/>
            <person name="Dougherty B.A."/>
            <person name="Tomb J.-F."/>
            <person name="Adams M.D."/>
            <person name="Reich C.I."/>
            <person name="Overbeek R."/>
            <person name="Kirkness E.F."/>
            <person name="Weinstock K.G."/>
            <person name="Merrick J.M."/>
            <person name="Glodek A."/>
            <person name="Scott J.L."/>
            <person name="Geoghagen N.S.M."/>
            <person name="Weidman J.F."/>
            <person name="Fuhrmann J.L."/>
            <person name="Nguyen D."/>
            <person name="Utterback T.R."/>
            <person name="Kelley J.M."/>
            <person name="Peterson J.D."/>
            <person name="Sadow P.W."/>
            <person name="Hanna M.C."/>
            <person name="Cotton M.D."/>
            <person name="Roberts K.M."/>
            <person name="Hurst M.A."/>
            <person name="Kaine B.P."/>
            <person name="Borodovsky M."/>
            <person name="Klenk H.-P."/>
            <person name="Fraser C.M."/>
            <person name="Smith H.O."/>
            <person name="Woese C.R."/>
            <person name="Venter J.C."/>
        </authorList>
    </citation>
    <scope>NUCLEOTIDE SEQUENCE [LARGE SCALE GENOMIC DNA]</scope>
    <source>
        <strain>ATCC 43067 / DSM 2661 / JAL-1 / JCM 10045 / NBRC 100440</strain>
    </source>
</reference>
<proteinExistence type="inferred from homology"/>
<sequence>MIVFKNTKIIDVYTGEVVKGNVAVERDKISFVDLNDEIDKIIEKIKEDVKVIDLKGKYLSPTFIDGHIHIESSHLIPSEFEKFVLKSGVSKVVIDPHEIANIAGKEGILFMLNDAKILDVYVMLPSCVPATNLETSGAEITAENIEELILLDNVLGLGEVMNYPAVINEDEEMLKKIEVAKKYNKLIDGHCPKLKGWELNKYISHGIMSDHESVDEDEALEKLRLGLKLMIREGTASKNIYLLNICKKIKDFRNIMLVSDDVCIKDLDGYMLNILRKATNYVSPIEAIQMVTINPANYFGFDVGIKAGNEASFVIFEDLDNFKVYNIVIKGRFLDDVLNELNKNKKRKIPEKLMNTLKYQYKNEGDFLIKGIDYKERDGFIRVIKPLKDSLITEELIFSTEEIKILLNENAINKIFVIERHKNTGNIGKGLIYNFLEEGALASSYAHDSHNVIAIGNNEKDLALAVNKLKDIGGGFIAAKDGEVVEYLPLPVGGIMGDDGKYIAEKINALYKKIEGWSSFENPFLSMSFFSLPVIPELKITDKGLVKDMQLVDLFI</sequence>
<gene>
    <name evidence="1" type="primary">ade</name>
    <name type="ordered locus">MJ1459</name>
</gene>
<dbReference type="EC" id="3.5.4.2" evidence="1"/>
<dbReference type="EMBL" id="L77117">
    <property type="protein sequence ID" value="AAB99467.1"/>
    <property type="molecule type" value="Genomic_DNA"/>
</dbReference>
<dbReference type="PIR" id="B64482">
    <property type="entry name" value="B64482"/>
</dbReference>
<dbReference type="RefSeq" id="WP_010870979.1">
    <property type="nucleotide sequence ID" value="NC_000909.1"/>
</dbReference>
<dbReference type="SMR" id="Q58854"/>
<dbReference type="FunCoup" id="Q58854">
    <property type="interactions" value="26"/>
</dbReference>
<dbReference type="STRING" id="243232.MJ_1459"/>
<dbReference type="PaxDb" id="243232-MJ_1459"/>
<dbReference type="EnsemblBacteria" id="AAB99467">
    <property type="protein sequence ID" value="AAB99467"/>
    <property type="gene ID" value="MJ_1459"/>
</dbReference>
<dbReference type="GeneID" id="1452363"/>
<dbReference type="KEGG" id="mja:MJ_1459"/>
<dbReference type="eggNOG" id="arCOG00693">
    <property type="taxonomic scope" value="Archaea"/>
</dbReference>
<dbReference type="HOGENOM" id="CLU_027935_0_0_2"/>
<dbReference type="InParanoid" id="Q58854"/>
<dbReference type="OrthoDB" id="24954at2157"/>
<dbReference type="PhylomeDB" id="Q58854"/>
<dbReference type="Proteomes" id="UP000000805">
    <property type="component" value="Chromosome"/>
</dbReference>
<dbReference type="GO" id="GO:0000034">
    <property type="term" value="F:adenine deaminase activity"/>
    <property type="evidence" value="ECO:0000318"/>
    <property type="project" value="GO_Central"/>
</dbReference>
<dbReference type="GO" id="GO:0006146">
    <property type="term" value="P:adenine catabolic process"/>
    <property type="evidence" value="ECO:0007669"/>
    <property type="project" value="InterPro"/>
</dbReference>
<dbReference type="CDD" id="cd01295">
    <property type="entry name" value="AdeC"/>
    <property type="match status" value="1"/>
</dbReference>
<dbReference type="FunFam" id="2.30.40.10:FF:000059">
    <property type="entry name" value="Adenine deaminase"/>
    <property type="match status" value="1"/>
</dbReference>
<dbReference type="FunFam" id="3.20.20.140:FF:000016">
    <property type="entry name" value="Adenine deaminase"/>
    <property type="match status" value="1"/>
</dbReference>
<dbReference type="Gene3D" id="3.20.20.140">
    <property type="entry name" value="Metal-dependent hydrolases"/>
    <property type="match status" value="1"/>
</dbReference>
<dbReference type="Gene3D" id="2.30.40.10">
    <property type="entry name" value="Urease, subunit C, domain 1"/>
    <property type="match status" value="1"/>
</dbReference>
<dbReference type="HAMAP" id="MF_01518">
    <property type="entry name" value="Adenine_deamin"/>
    <property type="match status" value="1"/>
</dbReference>
<dbReference type="InterPro" id="IPR006679">
    <property type="entry name" value="Adenine_deam"/>
</dbReference>
<dbReference type="InterPro" id="IPR026912">
    <property type="entry name" value="Adenine_deam_C"/>
</dbReference>
<dbReference type="InterPro" id="IPR006680">
    <property type="entry name" value="Amidohydro-rel"/>
</dbReference>
<dbReference type="InterPro" id="IPR011059">
    <property type="entry name" value="Metal-dep_hydrolase_composite"/>
</dbReference>
<dbReference type="InterPro" id="IPR032466">
    <property type="entry name" value="Metal_Hydrolase"/>
</dbReference>
<dbReference type="NCBIfam" id="TIGR01178">
    <property type="entry name" value="ade"/>
    <property type="match status" value="1"/>
</dbReference>
<dbReference type="PANTHER" id="PTHR11113:SF2">
    <property type="entry name" value="ADENINE DEAMINASE"/>
    <property type="match status" value="1"/>
</dbReference>
<dbReference type="PANTHER" id="PTHR11113">
    <property type="entry name" value="N-ACETYLGLUCOSAMINE-6-PHOSPHATE DEACETYLASE"/>
    <property type="match status" value="1"/>
</dbReference>
<dbReference type="Pfam" id="PF13382">
    <property type="entry name" value="Adenine_deam_C"/>
    <property type="match status" value="1"/>
</dbReference>
<dbReference type="Pfam" id="PF01979">
    <property type="entry name" value="Amidohydro_1"/>
    <property type="match status" value="1"/>
</dbReference>
<dbReference type="SUPFAM" id="SSF51338">
    <property type="entry name" value="Composite domain of metallo-dependent hydrolases"/>
    <property type="match status" value="1"/>
</dbReference>
<dbReference type="SUPFAM" id="SSF51556">
    <property type="entry name" value="Metallo-dependent hydrolases"/>
    <property type="match status" value="1"/>
</dbReference>
<protein>
    <recommendedName>
        <fullName evidence="1">Adenine deaminase</fullName>
        <shortName evidence="1">Adenase</shortName>
        <shortName evidence="1">Adenine aminase</shortName>
        <ecNumber evidence="1">3.5.4.2</ecNumber>
    </recommendedName>
</protein>
<feature type="chain" id="PRO_0000142440" description="Adenine deaminase">
    <location>
        <begin position="1"/>
        <end position="556"/>
    </location>
</feature>
<evidence type="ECO:0000255" key="1">
    <source>
        <dbReference type="HAMAP-Rule" id="MF_01518"/>
    </source>
</evidence>
<accession>Q58854</accession>
<name>ADEC_METJA</name>
<comment type="catalytic activity">
    <reaction evidence="1">
        <text>adenine + H2O + H(+) = hypoxanthine + NH4(+)</text>
        <dbReference type="Rhea" id="RHEA:23688"/>
        <dbReference type="ChEBI" id="CHEBI:15377"/>
        <dbReference type="ChEBI" id="CHEBI:15378"/>
        <dbReference type="ChEBI" id="CHEBI:16708"/>
        <dbReference type="ChEBI" id="CHEBI:17368"/>
        <dbReference type="ChEBI" id="CHEBI:28938"/>
        <dbReference type="EC" id="3.5.4.2"/>
    </reaction>
</comment>
<comment type="cofactor">
    <cofactor evidence="1">
        <name>Mn(2+)</name>
        <dbReference type="ChEBI" id="CHEBI:29035"/>
    </cofactor>
</comment>
<comment type="similarity">
    <text evidence="1">Belongs to the metallo-dependent hydrolases superfamily. Adenine deaminase family.</text>
</comment>